<sequence>MIQSAAPSCRRWWALGFAAVALWVDSTSGWTTQRPPMAGLRRFQSSAWYMSSSSTEKPTTSGTINGGGGKQKAASQPKKTAGIVYDAQKIRNFSIIAHIDHGKSTLADRLLETTQTVAQRDMEAQLLDNMDLERERGITIKLQAARVLYQARDGEMYCLNLIDTPGHVDFSYEVSRSLAACEGALLVVDASQGIEAQTLANVYLALENDLEIIPILNKIDLPAADPERVAEEIEATIGLDCSGIVHASAKTGIGIDDILERIVQMVPPPPAATGGPFRALIFDSYYDAYRGVIVFFRVMDGEVSQGDKVRFLASDAEHDVTEVGIMQPNQVPVDCLHAGEVGYLWGNIKDVLDARVGDTIVLAKEYKESASKGKSPPIEALPGYADSVPMVYCGLFPVDADQYESLRDALGKLRLNDAALSYEPESSGAMGFGFRCGFLGLLHMEIVQERLQREYDIDLIVTAPSVVYKVKKEHQEEFFIDTPAKMPDLGRNDVALEPYVRMEVLTPSEYNGAIIELGQERRGDLIDIKFLTPTRSTIVYELPLAEVITDFFDQLKSRTKGYASMEYSLIDYRASDLVRLDVKINYEMAPPLACVVHRDKAQSIGRRLCASLKDLIPRQMFKIPIQACIGVKVIASESISPMRKDVLAKCYGGDISRKKKLLQKQAKGKKRMKSIGKVNVPQEAFMAVLKLNE</sequence>
<feature type="chain" id="PRO_0000402863" description="Translation factor GUF1 homolog, mitochondrial">
    <location>
        <begin position="1"/>
        <end position="693"/>
    </location>
</feature>
<feature type="domain" description="tr-type G">
    <location>
        <begin position="88"/>
        <end position="270"/>
    </location>
</feature>
<feature type="region of interest" description="Disordered" evidence="2">
    <location>
        <begin position="51"/>
        <end position="78"/>
    </location>
</feature>
<feature type="compositionally biased region" description="Polar residues" evidence="2">
    <location>
        <begin position="51"/>
        <end position="63"/>
    </location>
</feature>
<feature type="binding site" evidence="1">
    <location>
        <begin position="97"/>
        <end position="104"/>
    </location>
    <ligand>
        <name>GTP</name>
        <dbReference type="ChEBI" id="CHEBI:37565"/>
    </ligand>
</feature>
<feature type="binding site" evidence="1">
    <location>
        <begin position="163"/>
        <end position="167"/>
    </location>
    <ligand>
        <name>GTP</name>
        <dbReference type="ChEBI" id="CHEBI:37565"/>
    </ligand>
</feature>
<feature type="binding site" evidence="1">
    <location>
        <begin position="217"/>
        <end position="220"/>
    </location>
    <ligand>
        <name>GTP</name>
        <dbReference type="ChEBI" id="CHEBI:37565"/>
    </ligand>
</feature>
<proteinExistence type="inferred from homology"/>
<accession>B7G816</accession>
<dbReference type="EC" id="3.6.5.-"/>
<dbReference type="EMBL" id="CM000620">
    <property type="protein sequence ID" value="EEC45456.1"/>
    <property type="molecule type" value="Genomic_DNA"/>
</dbReference>
<dbReference type="RefSeq" id="XP_002183238.1">
    <property type="nucleotide sequence ID" value="XM_002183202.1"/>
</dbReference>
<dbReference type="SMR" id="B7G816"/>
<dbReference type="FunCoup" id="B7G816">
    <property type="interactions" value="230"/>
</dbReference>
<dbReference type="STRING" id="556484.B7G816"/>
<dbReference type="PaxDb" id="2850-Phatr22622"/>
<dbReference type="EnsemblProtists" id="Phatr3_J22622.t1">
    <property type="protein sequence ID" value="Phatr3_J22622.p1"/>
    <property type="gene ID" value="Phatr3_J22622"/>
</dbReference>
<dbReference type="GeneID" id="7194856"/>
<dbReference type="KEGG" id="pti:PHATRDRAFT_22622"/>
<dbReference type="eggNOG" id="KOG0462">
    <property type="taxonomic scope" value="Eukaryota"/>
</dbReference>
<dbReference type="HOGENOM" id="CLU_009995_3_3_1"/>
<dbReference type="InParanoid" id="B7G816"/>
<dbReference type="OMA" id="EYSFVGY"/>
<dbReference type="OrthoDB" id="1074at2759"/>
<dbReference type="Proteomes" id="UP000000759">
    <property type="component" value="Chromosome 18"/>
</dbReference>
<dbReference type="GO" id="GO:0005743">
    <property type="term" value="C:mitochondrial inner membrane"/>
    <property type="evidence" value="ECO:0007669"/>
    <property type="project" value="UniProtKB-SubCell"/>
</dbReference>
<dbReference type="GO" id="GO:0005759">
    <property type="term" value="C:mitochondrial matrix"/>
    <property type="evidence" value="ECO:0007669"/>
    <property type="project" value="UniProtKB-UniRule"/>
</dbReference>
<dbReference type="GO" id="GO:0005525">
    <property type="term" value="F:GTP binding"/>
    <property type="evidence" value="ECO:0007669"/>
    <property type="project" value="UniProtKB-UniRule"/>
</dbReference>
<dbReference type="GO" id="GO:0003924">
    <property type="term" value="F:GTPase activity"/>
    <property type="evidence" value="ECO:0007669"/>
    <property type="project" value="UniProtKB-UniRule"/>
</dbReference>
<dbReference type="GO" id="GO:0043022">
    <property type="term" value="F:ribosome binding"/>
    <property type="evidence" value="ECO:0007669"/>
    <property type="project" value="UniProtKB-UniRule"/>
</dbReference>
<dbReference type="GO" id="GO:0045727">
    <property type="term" value="P:positive regulation of translation"/>
    <property type="evidence" value="ECO:0007669"/>
    <property type="project" value="UniProtKB-UniRule"/>
</dbReference>
<dbReference type="GO" id="GO:0006412">
    <property type="term" value="P:translation"/>
    <property type="evidence" value="ECO:0007669"/>
    <property type="project" value="UniProtKB-KW"/>
</dbReference>
<dbReference type="CDD" id="cd03699">
    <property type="entry name" value="EF4_II"/>
    <property type="match status" value="1"/>
</dbReference>
<dbReference type="CDD" id="cd16260">
    <property type="entry name" value="EF4_III"/>
    <property type="match status" value="1"/>
</dbReference>
<dbReference type="CDD" id="cd01890">
    <property type="entry name" value="LepA"/>
    <property type="match status" value="1"/>
</dbReference>
<dbReference type="CDD" id="cd03709">
    <property type="entry name" value="lepA_C"/>
    <property type="match status" value="1"/>
</dbReference>
<dbReference type="FunFam" id="3.40.50.300:FF:000078">
    <property type="entry name" value="Elongation factor 4"/>
    <property type="match status" value="1"/>
</dbReference>
<dbReference type="FunFam" id="2.40.30.10:FF:000015">
    <property type="entry name" value="Translation factor GUF1, mitochondrial"/>
    <property type="match status" value="1"/>
</dbReference>
<dbReference type="FunFam" id="3.30.70.240:FF:000007">
    <property type="entry name" value="Translation factor GUF1, mitochondrial"/>
    <property type="match status" value="1"/>
</dbReference>
<dbReference type="FunFam" id="3.30.70.2570:FF:000001">
    <property type="entry name" value="Translation factor GUF1, mitochondrial"/>
    <property type="match status" value="1"/>
</dbReference>
<dbReference type="FunFam" id="3.30.70.870:FF:000004">
    <property type="entry name" value="Translation factor GUF1, mitochondrial"/>
    <property type="match status" value="1"/>
</dbReference>
<dbReference type="Gene3D" id="3.30.70.240">
    <property type="match status" value="1"/>
</dbReference>
<dbReference type="Gene3D" id="3.30.70.2570">
    <property type="entry name" value="Elongation factor 4, C-terminal domain"/>
    <property type="match status" value="1"/>
</dbReference>
<dbReference type="Gene3D" id="3.30.70.870">
    <property type="entry name" value="Elongation Factor G (Translational Gtpase), domain 3"/>
    <property type="match status" value="1"/>
</dbReference>
<dbReference type="Gene3D" id="3.40.50.300">
    <property type="entry name" value="P-loop containing nucleotide triphosphate hydrolases"/>
    <property type="match status" value="1"/>
</dbReference>
<dbReference type="Gene3D" id="2.40.30.10">
    <property type="entry name" value="Translation factors"/>
    <property type="match status" value="1"/>
</dbReference>
<dbReference type="HAMAP" id="MF_00071">
    <property type="entry name" value="LepA"/>
    <property type="match status" value="1"/>
</dbReference>
<dbReference type="InterPro" id="IPR006297">
    <property type="entry name" value="EF-4"/>
</dbReference>
<dbReference type="InterPro" id="IPR035647">
    <property type="entry name" value="EFG_III/V"/>
</dbReference>
<dbReference type="InterPro" id="IPR000640">
    <property type="entry name" value="EFG_V-like"/>
</dbReference>
<dbReference type="InterPro" id="IPR004161">
    <property type="entry name" value="EFTu-like_2"/>
</dbReference>
<dbReference type="InterPro" id="IPR031157">
    <property type="entry name" value="G_TR_CS"/>
</dbReference>
<dbReference type="InterPro" id="IPR038363">
    <property type="entry name" value="LepA_C_sf"/>
</dbReference>
<dbReference type="InterPro" id="IPR013842">
    <property type="entry name" value="LepA_CTD"/>
</dbReference>
<dbReference type="InterPro" id="IPR035654">
    <property type="entry name" value="LepA_IV"/>
</dbReference>
<dbReference type="InterPro" id="IPR027417">
    <property type="entry name" value="P-loop_NTPase"/>
</dbReference>
<dbReference type="InterPro" id="IPR005225">
    <property type="entry name" value="Small_GTP-bd"/>
</dbReference>
<dbReference type="InterPro" id="IPR000795">
    <property type="entry name" value="T_Tr_GTP-bd_dom"/>
</dbReference>
<dbReference type="InterPro" id="IPR009000">
    <property type="entry name" value="Transl_B-barrel_sf"/>
</dbReference>
<dbReference type="NCBIfam" id="TIGR01393">
    <property type="entry name" value="lepA"/>
    <property type="match status" value="1"/>
</dbReference>
<dbReference type="NCBIfam" id="TIGR00231">
    <property type="entry name" value="small_GTP"/>
    <property type="match status" value="1"/>
</dbReference>
<dbReference type="PANTHER" id="PTHR43512:SF4">
    <property type="entry name" value="TRANSLATION FACTOR GUF1 HOMOLOG, CHLOROPLASTIC"/>
    <property type="match status" value="1"/>
</dbReference>
<dbReference type="PANTHER" id="PTHR43512">
    <property type="entry name" value="TRANSLATION FACTOR GUF1-RELATED"/>
    <property type="match status" value="1"/>
</dbReference>
<dbReference type="Pfam" id="PF00679">
    <property type="entry name" value="EFG_C"/>
    <property type="match status" value="1"/>
</dbReference>
<dbReference type="Pfam" id="PF00009">
    <property type="entry name" value="GTP_EFTU"/>
    <property type="match status" value="1"/>
</dbReference>
<dbReference type="Pfam" id="PF03144">
    <property type="entry name" value="GTP_EFTU_D2"/>
    <property type="match status" value="1"/>
</dbReference>
<dbReference type="Pfam" id="PF06421">
    <property type="entry name" value="LepA_C"/>
    <property type="match status" value="1"/>
</dbReference>
<dbReference type="PRINTS" id="PR00315">
    <property type="entry name" value="ELONGATNFCT"/>
</dbReference>
<dbReference type="SMART" id="SM00838">
    <property type="entry name" value="EFG_C"/>
    <property type="match status" value="1"/>
</dbReference>
<dbReference type="SUPFAM" id="SSF54980">
    <property type="entry name" value="EF-G C-terminal domain-like"/>
    <property type="match status" value="2"/>
</dbReference>
<dbReference type="SUPFAM" id="SSF52540">
    <property type="entry name" value="P-loop containing nucleoside triphosphate hydrolases"/>
    <property type="match status" value="1"/>
</dbReference>
<dbReference type="SUPFAM" id="SSF50447">
    <property type="entry name" value="Translation proteins"/>
    <property type="match status" value="1"/>
</dbReference>
<dbReference type="PROSITE" id="PS00301">
    <property type="entry name" value="G_TR_1"/>
    <property type="match status" value="1"/>
</dbReference>
<dbReference type="PROSITE" id="PS51722">
    <property type="entry name" value="G_TR_2"/>
    <property type="match status" value="1"/>
</dbReference>
<organism>
    <name type="scientific">Phaeodactylum tricornutum (strain CCAP 1055/1)</name>
    <dbReference type="NCBI Taxonomy" id="556484"/>
    <lineage>
        <taxon>Eukaryota</taxon>
        <taxon>Sar</taxon>
        <taxon>Stramenopiles</taxon>
        <taxon>Ochrophyta</taxon>
        <taxon>Bacillariophyta</taxon>
        <taxon>Bacillariophyceae</taxon>
        <taxon>Bacillariophycidae</taxon>
        <taxon>Naviculales</taxon>
        <taxon>Phaeodactylaceae</taxon>
        <taxon>Phaeodactylum</taxon>
    </lineage>
</organism>
<protein>
    <recommendedName>
        <fullName evidence="1">Translation factor GUF1 homolog, mitochondrial</fullName>
        <ecNumber>3.6.5.-</ecNumber>
    </recommendedName>
    <alternativeName>
        <fullName evidence="1">Elongation factor 4 homolog</fullName>
        <shortName evidence="1">EF-4</shortName>
    </alternativeName>
    <alternativeName>
        <fullName evidence="1">GTPase GUF1 homolog</fullName>
    </alternativeName>
    <alternativeName>
        <fullName evidence="1">Ribosomal back-translocase</fullName>
    </alternativeName>
</protein>
<keyword id="KW-0342">GTP-binding</keyword>
<keyword id="KW-0378">Hydrolase</keyword>
<keyword id="KW-0472">Membrane</keyword>
<keyword id="KW-0496">Mitochondrion</keyword>
<keyword id="KW-0999">Mitochondrion inner membrane</keyword>
<keyword id="KW-0547">Nucleotide-binding</keyword>
<keyword id="KW-0648">Protein biosynthesis</keyword>
<keyword id="KW-1185">Reference proteome</keyword>
<reference key="1">
    <citation type="journal article" date="2008" name="Nature">
        <title>The Phaeodactylum genome reveals the evolutionary history of diatom genomes.</title>
        <authorList>
            <person name="Bowler C."/>
            <person name="Allen A.E."/>
            <person name="Badger J.H."/>
            <person name="Grimwood J."/>
            <person name="Jabbari K."/>
            <person name="Kuo A."/>
            <person name="Maheswari U."/>
            <person name="Martens C."/>
            <person name="Maumus F."/>
            <person name="Otillar R.P."/>
            <person name="Rayko E."/>
            <person name="Salamov A."/>
            <person name="Vandepoele K."/>
            <person name="Beszteri B."/>
            <person name="Gruber A."/>
            <person name="Heijde M."/>
            <person name="Katinka M."/>
            <person name="Mock T."/>
            <person name="Valentin K."/>
            <person name="Verret F."/>
            <person name="Berges J.A."/>
            <person name="Brownlee C."/>
            <person name="Cadoret J.P."/>
            <person name="Chiovitti A."/>
            <person name="Choi C.J."/>
            <person name="Coesel S."/>
            <person name="De Martino A."/>
            <person name="Detter J.C."/>
            <person name="Durkin C."/>
            <person name="Falciatore A."/>
            <person name="Fournet J."/>
            <person name="Haruta M."/>
            <person name="Huysman M.J."/>
            <person name="Jenkins B.D."/>
            <person name="Jiroutova K."/>
            <person name="Jorgensen R.E."/>
            <person name="Joubert Y."/>
            <person name="Kaplan A."/>
            <person name="Kroger N."/>
            <person name="Kroth P.G."/>
            <person name="La Roche J."/>
            <person name="Lindquist E."/>
            <person name="Lommer M."/>
            <person name="Martin-Jezequel V."/>
            <person name="Lopez P.J."/>
            <person name="Lucas S."/>
            <person name="Mangogna M."/>
            <person name="McGinnis K."/>
            <person name="Medlin L.K."/>
            <person name="Montsant A."/>
            <person name="Oudot-Le Secq M.P."/>
            <person name="Napoli C."/>
            <person name="Obornik M."/>
            <person name="Parker M.S."/>
            <person name="Petit J.L."/>
            <person name="Porcel B.M."/>
            <person name="Poulsen N."/>
            <person name="Robison M."/>
            <person name="Rychlewski L."/>
            <person name="Rynearson T.A."/>
            <person name="Schmutz J."/>
            <person name="Shapiro H."/>
            <person name="Siaut M."/>
            <person name="Stanley M."/>
            <person name="Sussman M.R."/>
            <person name="Taylor A.R."/>
            <person name="Vardi A."/>
            <person name="von Dassow P."/>
            <person name="Vyverman W."/>
            <person name="Willis A."/>
            <person name="Wyrwicz L.S."/>
            <person name="Rokhsar D.S."/>
            <person name="Weissenbach J."/>
            <person name="Armbrust E.V."/>
            <person name="Green B.R."/>
            <person name="Van de Peer Y."/>
            <person name="Grigoriev I.V."/>
        </authorList>
    </citation>
    <scope>NUCLEOTIDE SEQUENCE [LARGE SCALE GENOMIC DNA]</scope>
    <source>
        <strain>CCAP 1055/1</strain>
    </source>
</reference>
<reference key="2">
    <citation type="submission" date="2008-08" db="EMBL/GenBank/DDBJ databases">
        <authorList>
            <consortium name="Diatom Consortium"/>
            <person name="Grigoriev I."/>
            <person name="Grimwood J."/>
            <person name="Kuo A."/>
            <person name="Otillar R.P."/>
            <person name="Salamov A."/>
            <person name="Detter J.C."/>
            <person name="Lindquist E."/>
            <person name="Shapiro H."/>
            <person name="Lucas S."/>
            <person name="Glavina del Rio T."/>
            <person name="Pitluck S."/>
            <person name="Rokhsar D."/>
            <person name="Bowler C."/>
        </authorList>
    </citation>
    <scope>GENOME REANNOTATION</scope>
    <source>
        <strain>CCAP 1055/1</strain>
    </source>
</reference>
<comment type="function">
    <text evidence="1">Promotes mitochondrial protein synthesis. May act as a fidelity factor of the translation reaction, by catalyzing a one-codon backward translocation of tRNAs on improperly translocated ribosomes. Binds to mitochondrial ribosomes in a GTP-dependent manner.</text>
</comment>
<comment type="catalytic activity">
    <reaction evidence="1">
        <text>GTP + H2O = GDP + phosphate + H(+)</text>
        <dbReference type="Rhea" id="RHEA:19669"/>
        <dbReference type="ChEBI" id="CHEBI:15377"/>
        <dbReference type="ChEBI" id="CHEBI:15378"/>
        <dbReference type="ChEBI" id="CHEBI:37565"/>
        <dbReference type="ChEBI" id="CHEBI:43474"/>
        <dbReference type="ChEBI" id="CHEBI:58189"/>
    </reaction>
</comment>
<comment type="subcellular location">
    <subcellularLocation>
        <location evidence="1">Mitochondrion inner membrane</location>
        <topology evidence="1">Peripheral membrane protein</topology>
        <orientation evidence="1">Matrix side</orientation>
    </subcellularLocation>
</comment>
<comment type="miscellaneous">
    <text evidence="1">This protein may be expected to contain an N-terminal transit peptide but none has been predicted.</text>
</comment>
<comment type="similarity">
    <text evidence="3">Belongs to the TRAFAC class translation factor GTPase superfamily. Classic translation factor GTPase family. LepA subfamily.</text>
</comment>
<gene>
    <name type="ORF">PHATRDRAFT_22622</name>
</gene>
<evidence type="ECO:0000255" key="1">
    <source>
        <dbReference type="HAMAP-Rule" id="MF_03137"/>
    </source>
</evidence>
<evidence type="ECO:0000256" key="2">
    <source>
        <dbReference type="SAM" id="MobiDB-lite"/>
    </source>
</evidence>
<evidence type="ECO:0000305" key="3"/>
<name>GUF1_PHATC</name>